<evidence type="ECO:0000255" key="1">
    <source>
        <dbReference type="HAMAP-Rule" id="MF_00406"/>
    </source>
</evidence>
<reference key="1">
    <citation type="submission" date="2008-05" db="EMBL/GenBank/DDBJ databases">
        <title>Complete sequence of Shigella boydii serotype 18 strain BS512.</title>
        <authorList>
            <person name="Rasko D.A."/>
            <person name="Rosovitz M."/>
            <person name="Maurelli A.T."/>
            <person name="Myers G."/>
            <person name="Seshadri R."/>
            <person name="Cer R."/>
            <person name="Jiang L."/>
            <person name="Ravel J."/>
            <person name="Sebastian Y."/>
        </authorList>
    </citation>
    <scope>NUCLEOTIDE SEQUENCE [LARGE SCALE GENOMIC DNA]</scope>
    <source>
        <strain>CDC 3083-94 / BS512</strain>
    </source>
</reference>
<gene>
    <name evidence="1" type="primary">fabZ</name>
    <name type="ordered locus">SbBS512_E0173</name>
</gene>
<proteinExistence type="inferred from homology"/>
<dbReference type="EC" id="4.2.1.59" evidence="1"/>
<dbReference type="EMBL" id="CP001063">
    <property type="protein sequence ID" value="ACD07295.1"/>
    <property type="molecule type" value="Genomic_DNA"/>
</dbReference>
<dbReference type="RefSeq" id="WP_000210739.1">
    <property type="nucleotide sequence ID" value="NC_010658.1"/>
</dbReference>
<dbReference type="SMR" id="B2U323"/>
<dbReference type="STRING" id="344609.SbBS512_E0173"/>
<dbReference type="GeneID" id="93777245"/>
<dbReference type="KEGG" id="sbc:SbBS512_E0173"/>
<dbReference type="HOGENOM" id="CLU_078912_1_0_6"/>
<dbReference type="Proteomes" id="UP000001030">
    <property type="component" value="Chromosome"/>
</dbReference>
<dbReference type="GO" id="GO:0005737">
    <property type="term" value="C:cytoplasm"/>
    <property type="evidence" value="ECO:0007669"/>
    <property type="project" value="UniProtKB-SubCell"/>
</dbReference>
<dbReference type="GO" id="GO:0016020">
    <property type="term" value="C:membrane"/>
    <property type="evidence" value="ECO:0007669"/>
    <property type="project" value="GOC"/>
</dbReference>
<dbReference type="GO" id="GO:0019171">
    <property type="term" value="F:(3R)-hydroxyacyl-[acyl-carrier-protein] dehydratase activity"/>
    <property type="evidence" value="ECO:0007669"/>
    <property type="project" value="UniProtKB-EC"/>
</dbReference>
<dbReference type="GO" id="GO:0006633">
    <property type="term" value="P:fatty acid biosynthetic process"/>
    <property type="evidence" value="ECO:0007669"/>
    <property type="project" value="UniProtKB-UniRule"/>
</dbReference>
<dbReference type="GO" id="GO:0009245">
    <property type="term" value="P:lipid A biosynthetic process"/>
    <property type="evidence" value="ECO:0007669"/>
    <property type="project" value="UniProtKB-UniRule"/>
</dbReference>
<dbReference type="CDD" id="cd01288">
    <property type="entry name" value="FabZ"/>
    <property type="match status" value="1"/>
</dbReference>
<dbReference type="FunFam" id="3.10.129.10:FF:000001">
    <property type="entry name" value="3-hydroxyacyl-[acyl-carrier-protein] dehydratase FabZ"/>
    <property type="match status" value="1"/>
</dbReference>
<dbReference type="Gene3D" id="3.10.129.10">
    <property type="entry name" value="Hotdog Thioesterase"/>
    <property type="match status" value="1"/>
</dbReference>
<dbReference type="HAMAP" id="MF_00406">
    <property type="entry name" value="FabZ"/>
    <property type="match status" value="1"/>
</dbReference>
<dbReference type="InterPro" id="IPR013114">
    <property type="entry name" value="FabA_FabZ"/>
</dbReference>
<dbReference type="InterPro" id="IPR010084">
    <property type="entry name" value="FabZ"/>
</dbReference>
<dbReference type="InterPro" id="IPR029069">
    <property type="entry name" value="HotDog_dom_sf"/>
</dbReference>
<dbReference type="NCBIfam" id="TIGR01750">
    <property type="entry name" value="fabZ"/>
    <property type="match status" value="1"/>
</dbReference>
<dbReference type="NCBIfam" id="NF000582">
    <property type="entry name" value="PRK00006.1"/>
    <property type="match status" value="1"/>
</dbReference>
<dbReference type="PANTHER" id="PTHR30272">
    <property type="entry name" value="3-HYDROXYACYL-[ACYL-CARRIER-PROTEIN] DEHYDRATASE"/>
    <property type="match status" value="1"/>
</dbReference>
<dbReference type="PANTHER" id="PTHR30272:SF1">
    <property type="entry name" value="3-HYDROXYACYL-[ACYL-CARRIER-PROTEIN] DEHYDRATASE"/>
    <property type="match status" value="1"/>
</dbReference>
<dbReference type="Pfam" id="PF07977">
    <property type="entry name" value="FabA"/>
    <property type="match status" value="1"/>
</dbReference>
<dbReference type="SUPFAM" id="SSF54637">
    <property type="entry name" value="Thioesterase/thiol ester dehydrase-isomerase"/>
    <property type="match status" value="1"/>
</dbReference>
<feature type="chain" id="PRO_1000123667" description="3-hydroxyacyl-[acyl-carrier-protein] dehydratase FabZ">
    <location>
        <begin position="1"/>
        <end position="151"/>
    </location>
</feature>
<feature type="active site" evidence="1">
    <location>
        <position position="54"/>
    </location>
</feature>
<protein>
    <recommendedName>
        <fullName evidence="1">3-hydroxyacyl-[acyl-carrier-protein] dehydratase FabZ</fullName>
        <ecNumber evidence="1">4.2.1.59</ecNumber>
    </recommendedName>
    <alternativeName>
        <fullName evidence="1">(3R)-hydroxymyristoyl-[acyl-carrier-protein] dehydratase</fullName>
        <shortName evidence="1">(3R)-hydroxymyristoyl-ACP dehydrase</shortName>
    </alternativeName>
    <alternativeName>
        <fullName evidence="1">Beta-hydroxyacyl-ACP dehydratase</fullName>
    </alternativeName>
</protein>
<name>FABZ_SHIB3</name>
<comment type="function">
    <text evidence="1">Involved in unsaturated fatty acids biosynthesis. Catalyzes the dehydration of short chain beta-hydroxyacyl-ACPs and long chain saturated and unsaturated beta-hydroxyacyl-ACPs.</text>
</comment>
<comment type="catalytic activity">
    <reaction evidence="1">
        <text>a (3R)-hydroxyacyl-[ACP] = a (2E)-enoyl-[ACP] + H2O</text>
        <dbReference type="Rhea" id="RHEA:13097"/>
        <dbReference type="Rhea" id="RHEA-COMP:9925"/>
        <dbReference type="Rhea" id="RHEA-COMP:9945"/>
        <dbReference type="ChEBI" id="CHEBI:15377"/>
        <dbReference type="ChEBI" id="CHEBI:78784"/>
        <dbReference type="ChEBI" id="CHEBI:78827"/>
        <dbReference type="EC" id="4.2.1.59"/>
    </reaction>
</comment>
<comment type="subunit">
    <text evidence="1">Oligomer.</text>
</comment>
<comment type="subcellular location">
    <subcellularLocation>
        <location evidence="1">Cytoplasm</location>
    </subcellularLocation>
</comment>
<comment type="PTM">
    <text evidence="1">The N-terminus is blocked.</text>
</comment>
<comment type="similarity">
    <text evidence="1">Belongs to the thioester dehydratase family. FabZ subfamily.</text>
</comment>
<keyword id="KW-0963">Cytoplasm</keyword>
<keyword id="KW-0441">Lipid A biosynthesis</keyword>
<keyword id="KW-0444">Lipid biosynthesis</keyword>
<keyword id="KW-0443">Lipid metabolism</keyword>
<keyword id="KW-0456">Lyase</keyword>
<keyword id="KW-1185">Reference proteome</keyword>
<organism>
    <name type="scientific">Shigella boydii serotype 18 (strain CDC 3083-94 / BS512)</name>
    <dbReference type="NCBI Taxonomy" id="344609"/>
    <lineage>
        <taxon>Bacteria</taxon>
        <taxon>Pseudomonadati</taxon>
        <taxon>Pseudomonadota</taxon>
        <taxon>Gammaproteobacteria</taxon>
        <taxon>Enterobacterales</taxon>
        <taxon>Enterobacteriaceae</taxon>
        <taxon>Shigella</taxon>
    </lineage>
</organism>
<accession>B2U323</accession>
<sequence length="151" mass="17033">MTTNTHTLQIEEILELLPHRFPFLLVDRVLDFEEGRFLRAVKNVSVNEPFFQGHFPGKPIFPGVLILEAMAQATGILAFKSVGKLEPGELYYFAGIDEARFKRPVVPGDQMIMEVTFEKTRRGLTRFKGVALVDGKVVCEATMMCARSREA</sequence>